<comment type="function">
    <text>Gamma chains make up the fetal hemoglobin F, in combination with alpha chains.</text>
</comment>
<comment type="subunit">
    <text>Heterotetramer of two alpha chains and two gamma chains in fetal hemoglobin (Hb F).</text>
</comment>
<comment type="tissue specificity">
    <text>Red blood cells.</text>
</comment>
<comment type="similarity">
    <text evidence="1">Belongs to the globin family.</text>
</comment>
<evidence type="ECO:0000255" key="1">
    <source>
        <dbReference type="PROSITE-ProRule" id="PRU00238"/>
    </source>
</evidence>
<evidence type="ECO:0000305" key="2"/>
<proteinExistence type="evidence at transcript level"/>
<name>HBG_OTOCR</name>
<sequence length="147" mass="16186">MVHFTAEEKAIITSLWGKVNVEEDGGEALGRLLVVYPWTQRFFDTFGNLSSASAIMGNPKVKAHGKKVLSSLGEAIKNMDDLKGTFSHLSELHCDRLHVDPENFRLLGNVLVIVLAKHFGKEFTPQIQAACQKMVAGVATALAHKYH</sequence>
<keyword id="KW-0349">Heme</keyword>
<keyword id="KW-0408">Iron</keyword>
<keyword id="KW-0479">Metal-binding</keyword>
<keyword id="KW-0561">Oxygen transport</keyword>
<keyword id="KW-0813">Transport</keyword>
<accession>P19760</accession>
<dbReference type="EMBL" id="M36305">
    <property type="protein sequence ID" value="AAA35447.1"/>
    <property type="molecule type" value="Genomic_DNA"/>
</dbReference>
<dbReference type="EMBL" id="U60902">
    <property type="protein sequence ID" value="AAC50961.1"/>
    <property type="molecule type" value="Genomic_DNA"/>
</dbReference>
<dbReference type="PIR" id="B42829">
    <property type="entry name" value="B42829"/>
</dbReference>
<dbReference type="PIR" id="S01376">
    <property type="entry name" value="HGGC"/>
</dbReference>
<dbReference type="SMR" id="P19760"/>
<dbReference type="GO" id="GO:0072562">
    <property type="term" value="C:blood microparticle"/>
    <property type="evidence" value="ECO:0007669"/>
    <property type="project" value="TreeGrafter"/>
</dbReference>
<dbReference type="GO" id="GO:0031838">
    <property type="term" value="C:haptoglobin-hemoglobin complex"/>
    <property type="evidence" value="ECO:0007669"/>
    <property type="project" value="TreeGrafter"/>
</dbReference>
<dbReference type="GO" id="GO:0005833">
    <property type="term" value="C:hemoglobin complex"/>
    <property type="evidence" value="ECO:0007669"/>
    <property type="project" value="InterPro"/>
</dbReference>
<dbReference type="GO" id="GO:0031720">
    <property type="term" value="F:haptoglobin binding"/>
    <property type="evidence" value="ECO:0007669"/>
    <property type="project" value="TreeGrafter"/>
</dbReference>
<dbReference type="GO" id="GO:0020037">
    <property type="term" value="F:heme binding"/>
    <property type="evidence" value="ECO:0007669"/>
    <property type="project" value="InterPro"/>
</dbReference>
<dbReference type="GO" id="GO:0031721">
    <property type="term" value="F:hemoglobin alpha binding"/>
    <property type="evidence" value="ECO:0007669"/>
    <property type="project" value="TreeGrafter"/>
</dbReference>
<dbReference type="GO" id="GO:0046872">
    <property type="term" value="F:metal ion binding"/>
    <property type="evidence" value="ECO:0007669"/>
    <property type="project" value="UniProtKB-KW"/>
</dbReference>
<dbReference type="GO" id="GO:0043177">
    <property type="term" value="F:organic acid binding"/>
    <property type="evidence" value="ECO:0007669"/>
    <property type="project" value="TreeGrafter"/>
</dbReference>
<dbReference type="GO" id="GO:0019825">
    <property type="term" value="F:oxygen binding"/>
    <property type="evidence" value="ECO:0007669"/>
    <property type="project" value="InterPro"/>
</dbReference>
<dbReference type="GO" id="GO:0005344">
    <property type="term" value="F:oxygen carrier activity"/>
    <property type="evidence" value="ECO:0007669"/>
    <property type="project" value="UniProtKB-KW"/>
</dbReference>
<dbReference type="GO" id="GO:0004601">
    <property type="term" value="F:peroxidase activity"/>
    <property type="evidence" value="ECO:0007669"/>
    <property type="project" value="TreeGrafter"/>
</dbReference>
<dbReference type="GO" id="GO:0042744">
    <property type="term" value="P:hydrogen peroxide catabolic process"/>
    <property type="evidence" value="ECO:0007669"/>
    <property type="project" value="TreeGrafter"/>
</dbReference>
<dbReference type="CDD" id="cd08925">
    <property type="entry name" value="Hb-beta-like"/>
    <property type="match status" value="1"/>
</dbReference>
<dbReference type="FunFam" id="1.10.490.10:FF:000001">
    <property type="entry name" value="Hemoglobin subunit beta"/>
    <property type="match status" value="1"/>
</dbReference>
<dbReference type="Gene3D" id="1.10.490.10">
    <property type="entry name" value="Globins"/>
    <property type="match status" value="1"/>
</dbReference>
<dbReference type="InterPro" id="IPR000971">
    <property type="entry name" value="Globin"/>
</dbReference>
<dbReference type="InterPro" id="IPR009050">
    <property type="entry name" value="Globin-like_sf"/>
</dbReference>
<dbReference type="InterPro" id="IPR012292">
    <property type="entry name" value="Globin/Proto"/>
</dbReference>
<dbReference type="InterPro" id="IPR002337">
    <property type="entry name" value="Hemoglobin_b"/>
</dbReference>
<dbReference type="InterPro" id="IPR050056">
    <property type="entry name" value="Hemoglobin_oxygen_transport"/>
</dbReference>
<dbReference type="PANTHER" id="PTHR11442">
    <property type="entry name" value="HEMOGLOBIN FAMILY MEMBER"/>
    <property type="match status" value="1"/>
</dbReference>
<dbReference type="PANTHER" id="PTHR11442:SF7">
    <property type="entry name" value="HEMOGLOBIN SUBUNIT EPSILON"/>
    <property type="match status" value="1"/>
</dbReference>
<dbReference type="Pfam" id="PF00042">
    <property type="entry name" value="Globin"/>
    <property type="match status" value="1"/>
</dbReference>
<dbReference type="PRINTS" id="PR00814">
    <property type="entry name" value="BETAHAEM"/>
</dbReference>
<dbReference type="SUPFAM" id="SSF46458">
    <property type="entry name" value="Globin-like"/>
    <property type="match status" value="1"/>
</dbReference>
<dbReference type="PROSITE" id="PS01033">
    <property type="entry name" value="GLOBIN"/>
    <property type="match status" value="1"/>
</dbReference>
<organism>
    <name type="scientific">Otolemur crassicaudatus</name>
    <name type="common">Brown greater galago</name>
    <name type="synonym">Galago crassicaudatus</name>
    <dbReference type="NCBI Taxonomy" id="9463"/>
    <lineage>
        <taxon>Eukaryota</taxon>
        <taxon>Metazoa</taxon>
        <taxon>Chordata</taxon>
        <taxon>Craniata</taxon>
        <taxon>Vertebrata</taxon>
        <taxon>Euteleostomi</taxon>
        <taxon>Mammalia</taxon>
        <taxon>Eutheria</taxon>
        <taxon>Euarchontoglires</taxon>
        <taxon>Primates</taxon>
        <taxon>Strepsirrhini</taxon>
        <taxon>Lorisiformes</taxon>
        <taxon>Galagidae</taxon>
        <taxon>Otolemur</taxon>
    </lineage>
</organism>
<protein>
    <recommendedName>
        <fullName>Hemoglobin subunit gamma</fullName>
    </recommendedName>
    <alternativeName>
        <fullName>Gamma-globin</fullName>
    </alternativeName>
    <alternativeName>
        <fullName>Hemoglobin gamma chain</fullName>
    </alternativeName>
</protein>
<feature type="chain" id="PRO_0000053250" description="Hemoglobin subunit gamma">
    <location>
        <begin position="1"/>
        <end position="147"/>
    </location>
</feature>
<feature type="domain" description="Globin" evidence="1">
    <location>
        <begin position="3"/>
        <end position="147"/>
    </location>
</feature>
<feature type="binding site" description="distal binding residue" evidence="1">
    <location>
        <position position="64"/>
    </location>
    <ligand>
        <name>heme b</name>
        <dbReference type="ChEBI" id="CHEBI:60344"/>
    </ligand>
    <ligandPart>
        <name>Fe</name>
        <dbReference type="ChEBI" id="CHEBI:18248"/>
    </ligandPart>
</feature>
<feature type="binding site" description="proximal binding residue" evidence="1">
    <location>
        <position position="93"/>
    </location>
    <ligand>
        <name>heme b</name>
        <dbReference type="ChEBI" id="CHEBI:60344"/>
    </ligand>
    <ligandPart>
        <name>Fe</name>
        <dbReference type="ChEBI" id="CHEBI:18248"/>
    </ligandPart>
</feature>
<feature type="sequence conflict" description="In Ref. 1; AAA35447." evidence="2" ref="1">
    <original>C</original>
    <variation>S</variation>
    <location>
        <position position="131"/>
    </location>
</feature>
<reference key="1">
    <citation type="journal article" date="1988" name="J. Mol. Biol.">
        <title>Embryonic epsilon and gamma globin genes of a prosimian primate (Galago crassicaudatus). Nucleotide and amino acid sequences, developmental regulation and phylogenetic footprints.</title>
        <authorList>
            <person name="Tagle D.A."/>
            <person name="Koop B.F."/>
            <person name="Goodman M."/>
            <person name="Slightom J.L."/>
            <person name="Hess D.L."/>
            <person name="Jones R.T."/>
        </authorList>
    </citation>
    <scope>NUCLEOTIDE SEQUENCE [GENOMIC DNA]</scope>
    <source>
        <tissue>Liver</tissue>
    </source>
</reference>
<reference key="2">
    <citation type="journal article" date="1992" name="Genomics">
        <title>The beta globin gene cluster of the prosimian primate Galago crassicaudatus: nucleotide sequence determination of the 41-kb cluster and comparative sequence analyses.</title>
        <authorList>
            <person name="Tagle D.A."/>
            <person name="Stanhope M.J."/>
            <person name="Siemieniak D.R."/>
            <person name="Benson P.J."/>
            <person name="Goodman M."/>
            <person name="Slightom J.L."/>
        </authorList>
    </citation>
    <scope>NUCLEOTIDE SEQUENCE [GENOMIC DNA]</scope>
    <source>
        <tissue>Liver</tissue>
    </source>
</reference>
<gene>
    <name type="primary">HBG</name>
</gene>